<accession>P49521</accession>
<protein>
    <recommendedName>
        <fullName evidence="1">Ribulose bisphosphate carboxylase small subunit</fullName>
        <shortName evidence="1">RuBisCO small subunit</shortName>
    </recommendedName>
</protein>
<geneLocation type="chloroplast"/>
<dbReference type="EMBL" id="Z67753">
    <property type="protein sequence ID" value="CAA91685.2"/>
    <property type="molecule type" value="Genomic_DNA"/>
</dbReference>
<dbReference type="PIR" id="S78312">
    <property type="entry name" value="S78312"/>
</dbReference>
<dbReference type="SMR" id="P49521"/>
<dbReference type="GO" id="GO:0009507">
    <property type="term" value="C:chloroplast"/>
    <property type="evidence" value="ECO:0007669"/>
    <property type="project" value="UniProtKB-SubCell"/>
</dbReference>
<dbReference type="GO" id="GO:0016984">
    <property type="term" value="F:ribulose-bisphosphate carboxylase activity"/>
    <property type="evidence" value="ECO:0007669"/>
    <property type="project" value="UniProtKB-UniRule"/>
</dbReference>
<dbReference type="GO" id="GO:0019253">
    <property type="term" value="P:reductive pentose-phosphate cycle"/>
    <property type="evidence" value="ECO:0007669"/>
    <property type="project" value="UniProtKB-UniRule"/>
</dbReference>
<dbReference type="CDD" id="cd03527">
    <property type="entry name" value="RuBisCO_small"/>
    <property type="match status" value="1"/>
</dbReference>
<dbReference type="Gene3D" id="3.30.190.10">
    <property type="entry name" value="Ribulose bisphosphate carboxylase, small subunit"/>
    <property type="match status" value="1"/>
</dbReference>
<dbReference type="HAMAP" id="MF_00859">
    <property type="entry name" value="RuBisCO_S_bact"/>
    <property type="match status" value="1"/>
</dbReference>
<dbReference type="InterPro" id="IPR024681">
    <property type="entry name" value="RuBisCO_ssu"/>
</dbReference>
<dbReference type="InterPro" id="IPR000894">
    <property type="entry name" value="RuBisCO_ssu_dom"/>
</dbReference>
<dbReference type="InterPro" id="IPR036385">
    <property type="entry name" value="RuBisCO_ssu_sf"/>
</dbReference>
<dbReference type="PANTHER" id="PTHR31262">
    <property type="entry name" value="RIBULOSE BISPHOSPHATE CARBOXYLASE SMALL CHAIN 1, CHLOROPLASTIC"/>
    <property type="match status" value="1"/>
</dbReference>
<dbReference type="PANTHER" id="PTHR31262:SF23">
    <property type="entry name" value="RIBULOSE BISPHOSPHATE CARBOXYLASE SMALL SUBUNIT"/>
    <property type="match status" value="1"/>
</dbReference>
<dbReference type="Pfam" id="PF00101">
    <property type="entry name" value="RuBisCO_small"/>
    <property type="match status" value="1"/>
</dbReference>
<dbReference type="SMART" id="SM00961">
    <property type="entry name" value="RuBisCO_small"/>
    <property type="match status" value="1"/>
</dbReference>
<dbReference type="SUPFAM" id="SSF55239">
    <property type="entry name" value="RuBisCO, small subunit"/>
    <property type="match status" value="1"/>
</dbReference>
<sequence length="139" mass="16014">MRLTQGCFSFLPDLTDQQIEKQIAYCIDKGWAMNVEWTDDPHPRNSYWELWGLPLFDIKDIASVMFELSEARKSCANGYIRMNAFDASYGTESCVMSFIVSRPSNEPGFYLERTEGAGRFITYTIKRYSVQANAEGSRY</sequence>
<comment type="function">
    <text evidence="1">RuBisCO catalyzes two reactions: the carboxylation of D-ribulose 1,5-bisphosphate, the primary event in carbon dioxide fixation, as well as the oxidative fragmentation of the pentose substrate in the photorespiration process. Both reactions occur simultaneously and in competition at the same active site. Although the small subunit is not catalytic it is essential for maximal activity.</text>
</comment>
<comment type="subunit">
    <text evidence="1">Heterohexadecamer of 8 large and 8 small subunits.</text>
</comment>
<comment type="subcellular location">
    <subcellularLocation>
        <location evidence="1">Plastid</location>
        <location evidence="1">Chloroplast</location>
    </subcellularLocation>
</comment>
<comment type="miscellaneous">
    <text>In this alga, in contrast to plants, the small subunit is encoded in the chloroplast.</text>
</comment>
<comment type="miscellaneous">
    <text evidence="1">The basic functional RuBisCO is composed of a large chain homodimer in a 'head-to-tail' conformation. In form I RuBisCO this homodimer is arranged in a barrel-like tetramer with the small subunits forming a tetrameric 'cap' on each end of the 'barrel'.</text>
</comment>
<comment type="similarity">
    <text evidence="1">Belongs to the RuBisCO small chain family.</text>
</comment>
<feature type="chain" id="PRO_0000198600" description="Ribulose bisphosphate carboxylase small subunit">
    <location>
        <begin position="1"/>
        <end position="139"/>
    </location>
</feature>
<evidence type="ECO:0000255" key="1">
    <source>
        <dbReference type="HAMAP-Rule" id="MF_00859"/>
    </source>
</evidence>
<gene>
    <name evidence="1" type="primary">rbcS</name>
</gene>
<name>RBS_TRICV</name>
<keyword id="KW-0113">Calvin cycle</keyword>
<keyword id="KW-0120">Carbon dioxide fixation</keyword>
<keyword id="KW-0150">Chloroplast</keyword>
<keyword id="KW-0601">Photorespiration</keyword>
<keyword id="KW-0602">Photosynthesis</keyword>
<keyword id="KW-0934">Plastid</keyword>
<organism>
    <name type="scientific">Trieres chinensis</name>
    <name type="common">Marine centric diatom</name>
    <name type="synonym">Odontella sinensis</name>
    <dbReference type="NCBI Taxonomy" id="1514140"/>
    <lineage>
        <taxon>Eukaryota</taxon>
        <taxon>Sar</taxon>
        <taxon>Stramenopiles</taxon>
        <taxon>Ochrophyta</taxon>
        <taxon>Bacillariophyta</taxon>
        <taxon>Mediophyceae</taxon>
        <taxon>Biddulphiophycidae</taxon>
        <taxon>Eupodiscales</taxon>
        <taxon>Parodontellaceae</taxon>
        <taxon>Trieres</taxon>
    </lineage>
</organism>
<reference key="1">
    <citation type="journal article" date="1995" name="Plant Mol. Biol. Rep.">
        <title>The chloroplast genome of a chlorophyll a+c-containing alga, Odontella sinensis.</title>
        <authorList>
            <person name="Kowallik K.V."/>
            <person name="Stoebe B."/>
            <person name="Schaffran I."/>
            <person name="Kroth-Pancic P."/>
            <person name="Freier U."/>
        </authorList>
    </citation>
    <scope>NUCLEOTIDE SEQUENCE [LARGE SCALE GENOMIC DNA]</scope>
</reference>
<proteinExistence type="inferred from homology"/>